<name>YOBD_SALPK</name>
<keyword id="KW-0997">Cell inner membrane</keyword>
<keyword id="KW-1003">Cell membrane</keyword>
<keyword id="KW-0472">Membrane</keyword>
<keyword id="KW-0812">Transmembrane</keyword>
<keyword id="KW-1133">Transmembrane helix</keyword>
<evidence type="ECO:0000255" key="1">
    <source>
        <dbReference type="HAMAP-Rule" id="MF_01071"/>
    </source>
</evidence>
<accession>B5BHC3</accession>
<sequence length="152" mass="17792">MTITDLVLILFIAALLVYALYDQFIMPRRNGPTLLSIALLRRGRVDSVIFVGLVAILIYNNVTSHGAQMTTWLLSALALMGFYIFWIRTPRIIFKQRGFFFANVWIEYNRIKEMNLSEDGVLVMQLEQRRLLIRVHNIDDLEKIYKLLIENQ</sequence>
<protein>
    <recommendedName>
        <fullName evidence="1">UPF0266 membrane protein YobD</fullName>
    </recommendedName>
</protein>
<feature type="chain" id="PRO_1000136650" description="UPF0266 membrane protein YobD">
    <location>
        <begin position="1"/>
        <end position="152"/>
    </location>
</feature>
<feature type="transmembrane region" description="Helical" evidence="1">
    <location>
        <begin position="6"/>
        <end position="26"/>
    </location>
</feature>
<feature type="transmembrane region" description="Helical" evidence="1">
    <location>
        <begin position="45"/>
        <end position="65"/>
    </location>
</feature>
<feature type="transmembrane region" description="Helical" evidence="1">
    <location>
        <begin position="67"/>
        <end position="87"/>
    </location>
</feature>
<comment type="subcellular location">
    <subcellularLocation>
        <location evidence="1">Cell inner membrane</location>
        <topology evidence="1">Multi-pass membrane protein</topology>
    </subcellularLocation>
</comment>
<comment type="similarity">
    <text evidence="1">Belongs to the UPF0266 family.</text>
</comment>
<proteinExistence type="inferred from homology"/>
<organism>
    <name type="scientific">Salmonella paratyphi A (strain AKU_12601)</name>
    <dbReference type="NCBI Taxonomy" id="554290"/>
    <lineage>
        <taxon>Bacteria</taxon>
        <taxon>Pseudomonadati</taxon>
        <taxon>Pseudomonadota</taxon>
        <taxon>Gammaproteobacteria</taxon>
        <taxon>Enterobacterales</taxon>
        <taxon>Enterobacteriaceae</taxon>
        <taxon>Salmonella</taxon>
    </lineage>
</organism>
<gene>
    <name evidence="1" type="primary">yobD</name>
    <name type="ordered locus">SSPA0970</name>
</gene>
<reference key="1">
    <citation type="journal article" date="2009" name="BMC Genomics">
        <title>Pseudogene accumulation in the evolutionary histories of Salmonella enterica serovars Paratyphi A and Typhi.</title>
        <authorList>
            <person name="Holt K.E."/>
            <person name="Thomson N.R."/>
            <person name="Wain J."/>
            <person name="Langridge G.C."/>
            <person name="Hasan R."/>
            <person name="Bhutta Z.A."/>
            <person name="Quail M.A."/>
            <person name="Norbertczak H."/>
            <person name="Walker D."/>
            <person name="Simmonds M."/>
            <person name="White B."/>
            <person name="Bason N."/>
            <person name="Mungall K."/>
            <person name="Dougan G."/>
            <person name="Parkhill J."/>
        </authorList>
    </citation>
    <scope>NUCLEOTIDE SEQUENCE [LARGE SCALE GENOMIC DNA]</scope>
    <source>
        <strain>AKU_12601</strain>
    </source>
</reference>
<dbReference type="EMBL" id="FM200053">
    <property type="protein sequence ID" value="CAR59121.1"/>
    <property type="molecule type" value="Genomic_DNA"/>
</dbReference>
<dbReference type="RefSeq" id="WP_000156291.1">
    <property type="nucleotide sequence ID" value="NC_011147.1"/>
</dbReference>
<dbReference type="KEGG" id="sek:SSPA0970"/>
<dbReference type="HOGENOM" id="CLU_133645_0_0_6"/>
<dbReference type="Proteomes" id="UP000001869">
    <property type="component" value="Chromosome"/>
</dbReference>
<dbReference type="GO" id="GO:0005886">
    <property type="term" value="C:plasma membrane"/>
    <property type="evidence" value="ECO:0007669"/>
    <property type="project" value="UniProtKB-SubCell"/>
</dbReference>
<dbReference type="HAMAP" id="MF_01071">
    <property type="entry name" value="UPF0266"/>
    <property type="match status" value="1"/>
</dbReference>
<dbReference type="InterPro" id="IPR009328">
    <property type="entry name" value="DUF986"/>
</dbReference>
<dbReference type="NCBIfam" id="NF002791">
    <property type="entry name" value="PRK02913.1"/>
    <property type="match status" value="1"/>
</dbReference>
<dbReference type="Pfam" id="PF06173">
    <property type="entry name" value="DUF986"/>
    <property type="match status" value="1"/>
</dbReference>
<dbReference type="PIRSF" id="PIRSF020687">
    <property type="entry name" value="UCP020687"/>
    <property type="match status" value="1"/>
</dbReference>